<feature type="chain" id="PRO_1000129870" description="GMP reductase">
    <location>
        <begin position="1"/>
        <end position="347"/>
    </location>
</feature>
<feature type="active site" description="Thioimidate intermediate" evidence="1">
    <location>
        <position position="186"/>
    </location>
</feature>
<feature type="binding site" evidence="1">
    <location>
        <begin position="108"/>
        <end position="131"/>
    </location>
    <ligand>
        <name>NADP(+)</name>
        <dbReference type="ChEBI" id="CHEBI:58349"/>
    </ligand>
</feature>
<feature type="binding site" evidence="1">
    <location>
        <position position="181"/>
    </location>
    <ligand>
        <name>K(+)</name>
        <dbReference type="ChEBI" id="CHEBI:29103"/>
    </ligand>
</feature>
<feature type="binding site" evidence="1">
    <location>
        <position position="183"/>
    </location>
    <ligand>
        <name>K(+)</name>
        <dbReference type="ChEBI" id="CHEBI:29103"/>
    </ligand>
</feature>
<feature type="binding site" evidence="1">
    <location>
        <begin position="216"/>
        <end position="239"/>
    </location>
    <ligand>
        <name>NADP(+)</name>
        <dbReference type="ChEBI" id="CHEBI:58349"/>
    </ligand>
</feature>
<evidence type="ECO:0000255" key="1">
    <source>
        <dbReference type="HAMAP-Rule" id="MF_00596"/>
    </source>
</evidence>
<proteinExistence type="inferred from homology"/>
<dbReference type="EC" id="1.7.1.7" evidence="1"/>
<dbReference type="EMBL" id="CP001048">
    <property type="protein sequence ID" value="ACC87716.1"/>
    <property type="molecule type" value="Genomic_DNA"/>
</dbReference>
<dbReference type="RefSeq" id="WP_002209320.1">
    <property type="nucleotide sequence ID" value="NZ_CP009780.1"/>
</dbReference>
<dbReference type="SMR" id="B2K4G3"/>
<dbReference type="KEGG" id="ypb:YPTS_0732"/>
<dbReference type="PATRIC" id="fig|502801.10.peg.62"/>
<dbReference type="GO" id="GO:0005829">
    <property type="term" value="C:cytosol"/>
    <property type="evidence" value="ECO:0007669"/>
    <property type="project" value="TreeGrafter"/>
</dbReference>
<dbReference type="GO" id="GO:1902560">
    <property type="term" value="C:GMP reductase complex"/>
    <property type="evidence" value="ECO:0007669"/>
    <property type="project" value="InterPro"/>
</dbReference>
<dbReference type="GO" id="GO:0003920">
    <property type="term" value="F:GMP reductase activity"/>
    <property type="evidence" value="ECO:0007669"/>
    <property type="project" value="UniProtKB-UniRule"/>
</dbReference>
<dbReference type="GO" id="GO:0046872">
    <property type="term" value="F:metal ion binding"/>
    <property type="evidence" value="ECO:0007669"/>
    <property type="project" value="UniProtKB-KW"/>
</dbReference>
<dbReference type="GO" id="GO:0006163">
    <property type="term" value="P:purine nucleotide metabolic process"/>
    <property type="evidence" value="ECO:0007669"/>
    <property type="project" value="UniProtKB-UniRule"/>
</dbReference>
<dbReference type="CDD" id="cd00381">
    <property type="entry name" value="IMPDH"/>
    <property type="match status" value="1"/>
</dbReference>
<dbReference type="FunFam" id="3.20.20.70:FF:000012">
    <property type="entry name" value="GMP reductase"/>
    <property type="match status" value="1"/>
</dbReference>
<dbReference type="Gene3D" id="3.20.20.70">
    <property type="entry name" value="Aldolase class I"/>
    <property type="match status" value="1"/>
</dbReference>
<dbReference type="HAMAP" id="MF_00596">
    <property type="entry name" value="GMP_reduct_type1"/>
    <property type="match status" value="1"/>
</dbReference>
<dbReference type="InterPro" id="IPR013785">
    <property type="entry name" value="Aldolase_TIM"/>
</dbReference>
<dbReference type="InterPro" id="IPR050139">
    <property type="entry name" value="GMP_reductase"/>
</dbReference>
<dbReference type="InterPro" id="IPR005993">
    <property type="entry name" value="GMPR"/>
</dbReference>
<dbReference type="InterPro" id="IPR015875">
    <property type="entry name" value="IMP_DH/GMP_Rdtase_CS"/>
</dbReference>
<dbReference type="InterPro" id="IPR001093">
    <property type="entry name" value="IMP_DH_GMPRt"/>
</dbReference>
<dbReference type="NCBIfam" id="TIGR01305">
    <property type="entry name" value="GMP_reduct_1"/>
    <property type="match status" value="1"/>
</dbReference>
<dbReference type="NCBIfam" id="NF003470">
    <property type="entry name" value="PRK05096.1"/>
    <property type="match status" value="1"/>
</dbReference>
<dbReference type="PANTHER" id="PTHR43170">
    <property type="entry name" value="GMP REDUCTASE"/>
    <property type="match status" value="1"/>
</dbReference>
<dbReference type="PANTHER" id="PTHR43170:SF5">
    <property type="entry name" value="GMP REDUCTASE"/>
    <property type="match status" value="1"/>
</dbReference>
<dbReference type="Pfam" id="PF00478">
    <property type="entry name" value="IMPDH"/>
    <property type="match status" value="1"/>
</dbReference>
<dbReference type="PIRSF" id="PIRSF000235">
    <property type="entry name" value="GMP_reductase"/>
    <property type="match status" value="1"/>
</dbReference>
<dbReference type="SMART" id="SM01240">
    <property type="entry name" value="IMPDH"/>
    <property type="match status" value="1"/>
</dbReference>
<dbReference type="SUPFAM" id="SSF51412">
    <property type="entry name" value="Inosine monophosphate dehydrogenase (IMPDH)"/>
    <property type="match status" value="1"/>
</dbReference>
<dbReference type="PROSITE" id="PS00487">
    <property type="entry name" value="IMP_DH_GMP_RED"/>
    <property type="match status" value="1"/>
</dbReference>
<accession>B2K4G3</accession>
<comment type="function">
    <text evidence="1">Catalyzes the irreversible NADPH-dependent deamination of GMP to IMP. It functions in the conversion of nucleobase, nucleoside and nucleotide derivatives of G to A nucleotides, and in maintaining the intracellular balance of A and G nucleotides.</text>
</comment>
<comment type="catalytic activity">
    <reaction evidence="1">
        <text>IMP + NH4(+) + NADP(+) = GMP + NADPH + 2 H(+)</text>
        <dbReference type="Rhea" id="RHEA:17185"/>
        <dbReference type="ChEBI" id="CHEBI:15378"/>
        <dbReference type="ChEBI" id="CHEBI:28938"/>
        <dbReference type="ChEBI" id="CHEBI:57783"/>
        <dbReference type="ChEBI" id="CHEBI:58053"/>
        <dbReference type="ChEBI" id="CHEBI:58115"/>
        <dbReference type="ChEBI" id="CHEBI:58349"/>
        <dbReference type="EC" id="1.7.1.7"/>
    </reaction>
</comment>
<comment type="subunit">
    <text evidence="1">Homotetramer.</text>
</comment>
<comment type="similarity">
    <text evidence="1">Belongs to the IMPDH/GMPR family. GuaC type 1 subfamily.</text>
</comment>
<gene>
    <name evidence="1" type="primary">guaC</name>
    <name type="ordered locus">YPTS_0732</name>
</gene>
<organism>
    <name type="scientific">Yersinia pseudotuberculosis serotype IB (strain PB1/+)</name>
    <dbReference type="NCBI Taxonomy" id="502801"/>
    <lineage>
        <taxon>Bacteria</taxon>
        <taxon>Pseudomonadati</taxon>
        <taxon>Pseudomonadota</taxon>
        <taxon>Gammaproteobacteria</taxon>
        <taxon>Enterobacterales</taxon>
        <taxon>Yersiniaceae</taxon>
        <taxon>Yersinia</taxon>
    </lineage>
</organism>
<name>GUAC_YERPB</name>
<protein>
    <recommendedName>
        <fullName evidence="1">GMP reductase</fullName>
        <ecNumber evidence="1">1.7.1.7</ecNumber>
    </recommendedName>
    <alternativeName>
        <fullName evidence="1">Guanosine 5'-monophosphate oxidoreductase</fullName>
        <shortName evidence="1">Guanosine monophosphate reductase</shortName>
    </alternativeName>
</protein>
<keyword id="KW-0479">Metal-binding</keyword>
<keyword id="KW-0521">NADP</keyword>
<keyword id="KW-0560">Oxidoreductase</keyword>
<keyword id="KW-0630">Potassium</keyword>
<reference key="1">
    <citation type="submission" date="2008-04" db="EMBL/GenBank/DDBJ databases">
        <title>Complete sequence of Yersinia pseudotuberculosis PB1/+.</title>
        <authorList>
            <person name="Copeland A."/>
            <person name="Lucas S."/>
            <person name="Lapidus A."/>
            <person name="Glavina del Rio T."/>
            <person name="Dalin E."/>
            <person name="Tice H."/>
            <person name="Bruce D."/>
            <person name="Goodwin L."/>
            <person name="Pitluck S."/>
            <person name="Munk A.C."/>
            <person name="Brettin T."/>
            <person name="Detter J.C."/>
            <person name="Han C."/>
            <person name="Tapia R."/>
            <person name="Schmutz J."/>
            <person name="Larimer F."/>
            <person name="Land M."/>
            <person name="Hauser L."/>
            <person name="Challacombe J.F."/>
            <person name="Green L."/>
            <person name="Lindler L.E."/>
            <person name="Nikolich M.P."/>
            <person name="Richardson P."/>
        </authorList>
    </citation>
    <scope>NUCLEOTIDE SEQUENCE [LARGE SCALE GENOMIC DNA]</scope>
    <source>
        <strain>PB1/+</strain>
    </source>
</reference>
<sequence length="347" mass="37492">MRIEEGLKLGFKDVLIRPKRSTLKSRSEVALERQFTFKHSGWNWSGVPIIAANMDTVGTFRMAEVLASFDILTAVHKHYTLEQWAEFVKRSPESVLRHVMVSTGTSSADFDKMKQILALSPSLKFICIDVANGYSEHFVSFLQRAREACPDKVICAGNVVTGEMVEELILSGADIVKVGIGPGSVCTTRVKTGVGYPQLSAVIECADAAHGLGGQIVSDGGCSVPGDVAKAFGGGADFVMLGGMLAGHDECEGRVVEENGEKFMLFYGMSSESAMKRHVGGVAQYRAAEGKTVKLPLRGSVDNTVRDIMGGLRSACTYVGASHLKELTKRTTFIRVAEQENRVFGTD</sequence>